<feature type="chain" id="PRO_1000166029" description="Large ribosomal subunit protein uL4">
    <location>
        <begin position="1"/>
        <end position="207"/>
    </location>
</feature>
<feature type="region of interest" description="Disordered" evidence="2">
    <location>
        <begin position="49"/>
        <end position="78"/>
    </location>
</feature>
<comment type="function">
    <text evidence="1">One of the primary rRNA binding proteins, this protein initially binds near the 5'-end of the 23S rRNA. It is important during the early stages of 50S assembly. It makes multiple contacts with different domains of the 23S rRNA in the assembled 50S subunit and ribosome.</text>
</comment>
<comment type="function">
    <text evidence="1">Forms part of the polypeptide exit tunnel.</text>
</comment>
<comment type="subunit">
    <text evidence="1">Part of the 50S ribosomal subunit.</text>
</comment>
<comment type="similarity">
    <text evidence="1">Belongs to the universal ribosomal protein uL4 family.</text>
</comment>
<sequence>MANVTLFDQTGKEAGQVVLSDAVFGIEPNESVVFDVIISQRASLRQGTHAVKNRSAVSGGGRKPWRQKGTGRARQGSIRSPQWRGGGVVFGPTPRSYGYKLPQKVRRLALKSVYSEKVAENKFVAVDALSFTAPKTAEFAKVLAALSIDSKVLVILEEGNEFAALSARNLPNVKVATATTASVLDIANSDKLLVTQAAISKIEEVLA</sequence>
<dbReference type="EMBL" id="CP000919">
    <property type="protein sequence ID" value="ACO19140.1"/>
    <property type="molecule type" value="Genomic_DNA"/>
</dbReference>
<dbReference type="RefSeq" id="WP_000024543.1">
    <property type="nucleotide sequence ID" value="NC_012466.1"/>
</dbReference>
<dbReference type="SMR" id="C1CC07"/>
<dbReference type="GeneID" id="45652308"/>
<dbReference type="KEGG" id="sjj:SPJ_0220"/>
<dbReference type="HOGENOM" id="CLU_041575_5_2_9"/>
<dbReference type="Proteomes" id="UP000002206">
    <property type="component" value="Chromosome"/>
</dbReference>
<dbReference type="GO" id="GO:1990904">
    <property type="term" value="C:ribonucleoprotein complex"/>
    <property type="evidence" value="ECO:0007669"/>
    <property type="project" value="UniProtKB-KW"/>
</dbReference>
<dbReference type="GO" id="GO:0005840">
    <property type="term" value="C:ribosome"/>
    <property type="evidence" value="ECO:0007669"/>
    <property type="project" value="UniProtKB-KW"/>
</dbReference>
<dbReference type="GO" id="GO:0019843">
    <property type="term" value="F:rRNA binding"/>
    <property type="evidence" value="ECO:0007669"/>
    <property type="project" value="UniProtKB-UniRule"/>
</dbReference>
<dbReference type="GO" id="GO:0003735">
    <property type="term" value="F:structural constituent of ribosome"/>
    <property type="evidence" value="ECO:0007669"/>
    <property type="project" value="InterPro"/>
</dbReference>
<dbReference type="GO" id="GO:0006412">
    <property type="term" value="P:translation"/>
    <property type="evidence" value="ECO:0007669"/>
    <property type="project" value="UniProtKB-UniRule"/>
</dbReference>
<dbReference type="FunFam" id="3.40.1370.10:FF:000003">
    <property type="entry name" value="50S ribosomal protein L4"/>
    <property type="match status" value="1"/>
</dbReference>
<dbReference type="Gene3D" id="3.40.1370.10">
    <property type="match status" value="1"/>
</dbReference>
<dbReference type="HAMAP" id="MF_01328_B">
    <property type="entry name" value="Ribosomal_uL4_B"/>
    <property type="match status" value="1"/>
</dbReference>
<dbReference type="InterPro" id="IPR002136">
    <property type="entry name" value="Ribosomal_uL4"/>
</dbReference>
<dbReference type="InterPro" id="IPR013005">
    <property type="entry name" value="Ribosomal_uL4-like"/>
</dbReference>
<dbReference type="InterPro" id="IPR023574">
    <property type="entry name" value="Ribosomal_uL4_dom_sf"/>
</dbReference>
<dbReference type="NCBIfam" id="TIGR03953">
    <property type="entry name" value="rplD_bact"/>
    <property type="match status" value="1"/>
</dbReference>
<dbReference type="PANTHER" id="PTHR10746">
    <property type="entry name" value="50S RIBOSOMAL PROTEIN L4"/>
    <property type="match status" value="1"/>
</dbReference>
<dbReference type="PANTHER" id="PTHR10746:SF6">
    <property type="entry name" value="LARGE RIBOSOMAL SUBUNIT PROTEIN UL4M"/>
    <property type="match status" value="1"/>
</dbReference>
<dbReference type="Pfam" id="PF00573">
    <property type="entry name" value="Ribosomal_L4"/>
    <property type="match status" value="1"/>
</dbReference>
<dbReference type="SUPFAM" id="SSF52166">
    <property type="entry name" value="Ribosomal protein L4"/>
    <property type="match status" value="1"/>
</dbReference>
<reference key="1">
    <citation type="journal article" date="2010" name="Genome Biol.">
        <title>Structure and dynamics of the pan-genome of Streptococcus pneumoniae and closely related species.</title>
        <authorList>
            <person name="Donati C."/>
            <person name="Hiller N.L."/>
            <person name="Tettelin H."/>
            <person name="Muzzi A."/>
            <person name="Croucher N.J."/>
            <person name="Angiuoli S.V."/>
            <person name="Oggioni M."/>
            <person name="Dunning Hotopp J.C."/>
            <person name="Hu F.Z."/>
            <person name="Riley D.R."/>
            <person name="Covacci A."/>
            <person name="Mitchell T.J."/>
            <person name="Bentley S.D."/>
            <person name="Kilian M."/>
            <person name="Ehrlich G.D."/>
            <person name="Rappuoli R."/>
            <person name="Moxon E.R."/>
            <person name="Masignani V."/>
        </authorList>
    </citation>
    <scope>NUCLEOTIDE SEQUENCE [LARGE SCALE GENOMIC DNA]</scope>
    <source>
        <strain>JJA</strain>
    </source>
</reference>
<proteinExistence type="inferred from homology"/>
<keyword id="KW-0687">Ribonucleoprotein</keyword>
<keyword id="KW-0689">Ribosomal protein</keyword>
<keyword id="KW-0694">RNA-binding</keyword>
<keyword id="KW-0699">rRNA-binding</keyword>
<organism>
    <name type="scientific">Streptococcus pneumoniae (strain JJA)</name>
    <dbReference type="NCBI Taxonomy" id="488222"/>
    <lineage>
        <taxon>Bacteria</taxon>
        <taxon>Bacillati</taxon>
        <taxon>Bacillota</taxon>
        <taxon>Bacilli</taxon>
        <taxon>Lactobacillales</taxon>
        <taxon>Streptococcaceae</taxon>
        <taxon>Streptococcus</taxon>
    </lineage>
</organism>
<name>RL4_STRZJ</name>
<accession>C1CC07</accession>
<protein>
    <recommendedName>
        <fullName evidence="1">Large ribosomal subunit protein uL4</fullName>
    </recommendedName>
    <alternativeName>
        <fullName evidence="3">50S ribosomal protein L4</fullName>
    </alternativeName>
</protein>
<evidence type="ECO:0000255" key="1">
    <source>
        <dbReference type="HAMAP-Rule" id="MF_01328"/>
    </source>
</evidence>
<evidence type="ECO:0000256" key="2">
    <source>
        <dbReference type="SAM" id="MobiDB-lite"/>
    </source>
</evidence>
<evidence type="ECO:0000305" key="3"/>
<gene>
    <name evidence="1" type="primary">rplD</name>
    <name type="ordered locus">SPJ_0220</name>
</gene>